<sequence>MTKKEQALIEQYAKSLVEVASEHHSLDALQADVLAILETFVTTNLDQSLSSLAVPHAEKIKLLTLLKGNNSVYMNNFLNLILQNEREAYLYQMLQTVLNEIAIVSNQYDVTVTSSLPLTEEQKSRVRAVVAKKFAVTAGRLIEKVDPSLIGGFIISVNNKVIDTSIRRQLQAFKMNLK</sequence>
<dbReference type="EMBL" id="AM295007">
    <property type="protein sequence ID" value="CAM30554.1"/>
    <property type="molecule type" value="Genomic_DNA"/>
</dbReference>
<dbReference type="RefSeq" id="WP_002985240.1">
    <property type="nucleotide sequence ID" value="NC_009332.1"/>
</dbReference>
<dbReference type="SMR" id="A2RFC5"/>
<dbReference type="KEGG" id="spf:SpyM51230"/>
<dbReference type="HOGENOM" id="CLU_085114_1_2_9"/>
<dbReference type="GO" id="GO:0005886">
    <property type="term" value="C:plasma membrane"/>
    <property type="evidence" value="ECO:0007669"/>
    <property type="project" value="UniProtKB-SubCell"/>
</dbReference>
<dbReference type="GO" id="GO:0045259">
    <property type="term" value="C:proton-transporting ATP synthase complex"/>
    <property type="evidence" value="ECO:0007669"/>
    <property type="project" value="UniProtKB-KW"/>
</dbReference>
<dbReference type="GO" id="GO:0046933">
    <property type="term" value="F:proton-transporting ATP synthase activity, rotational mechanism"/>
    <property type="evidence" value="ECO:0007669"/>
    <property type="project" value="UniProtKB-UniRule"/>
</dbReference>
<dbReference type="Gene3D" id="1.10.520.20">
    <property type="entry name" value="N-terminal domain of the delta subunit of the F1F0-ATP synthase"/>
    <property type="match status" value="1"/>
</dbReference>
<dbReference type="HAMAP" id="MF_01416">
    <property type="entry name" value="ATP_synth_delta_bact"/>
    <property type="match status" value="1"/>
</dbReference>
<dbReference type="InterPro" id="IPR026015">
    <property type="entry name" value="ATP_synth_OSCP/delta_N_sf"/>
</dbReference>
<dbReference type="InterPro" id="IPR000711">
    <property type="entry name" value="ATPase_OSCP/dsu"/>
</dbReference>
<dbReference type="NCBIfam" id="TIGR01145">
    <property type="entry name" value="ATP_synt_delta"/>
    <property type="match status" value="1"/>
</dbReference>
<dbReference type="NCBIfam" id="NF004401">
    <property type="entry name" value="PRK05758.2-1"/>
    <property type="match status" value="1"/>
</dbReference>
<dbReference type="PANTHER" id="PTHR11910">
    <property type="entry name" value="ATP SYNTHASE DELTA CHAIN"/>
    <property type="match status" value="1"/>
</dbReference>
<dbReference type="Pfam" id="PF00213">
    <property type="entry name" value="OSCP"/>
    <property type="match status" value="1"/>
</dbReference>
<dbReference type="PRINTS" id="PR00125">
    <property type="entry name" value="ATPASEDELTA"/>
</dbReference>
<dbReference type="SUPFAM" id="SSF47928">
    <property type="entry name" value="N-terminal domain of the delta subunit of the F1F0-ATP synthase"/>
    <property type="match status" value="1"/>
</dbReference>
<name>ATPD_STRPG</name>
<gene>
    <name evidence="1" type="primary">atpH</name>
    <name type="ordered locus">SpyM51230</name>
</gene>
<organism>
    <name type="scientific">Streptococcus pyogenes serotype M5 (strain Manfredo)</name>
    <dbReference type="NCBI Taxonomy" id="160491"/>
    <lineage>
        <taxon>Bacteria</taxon>
        <taxon>Bacillati</taxon>
        <taxon>Bacillota</taxon>
        <taxon>Bacilli</taxon>
        <taxon>Lactobacillales</taxon>
        <taxon>Streptococcaceae</taxon>
        <taxon>Streptococcus</taxon>
    </lineage>
</organism>
<reference key="1">
    <citation type="journal article" date="2007" name="J. Bacteriol.">
        <title>Complete genome of acute rheumatic fever-associated serotype M5 Streptococcus pyogenes strain Manfredo.</title>
        <authorList>
            <person name="Holden M.T.G."/>
            <person name="Scott A."/>
            <person name="Cherevach I."/>
            <person name="Chillingworth T."/>
            <person name="Churcher C."/>
            <person name="Cronin A."/>
            <person name="Dowd L."/>
            <person name="Feltwell T."/>
            <person name="Hamlin N."/>
            <person name="Holroyd S."/>
            <person name="Jagels K."/>
            <person name="Moule S."/>
            <person name="Mungall K."/>
            <person name="Quail M.A."/>
            <person name="Price C."/>
            <person name="Rabbinowitsch E."/>
            <person name="Sharp S."/>
            <person name="Skelton J."/>
            <person name="Whitehead S."/>
            <person name="Barrell B.G."/>
            <person name="Kehoe M."/>
            <person name="Parkhill J."/>
        </authorList>
    </citation>
    <scope>NUCLEOTIDE SEQUENCE [LARGE SCALE GENOMIC DNA]</scope>
    <source>
        <strain>Manfredo</strain>
    </source>
</reference>
<feature type="chain" id="PRO_0000371165" description="ATP synthase subunit delta">
    <location>
        <begin position="1"/>
        <end position="178"/>
    </location>
</feature>
<comment type="function">
    <text evidence="1">F(1)F(0) ATP synthase produces ATP from ADP in the presence of a proton or sodium gradient. F-type ATPases consist of two structural domains, F(1) containing the extramembraneous catalytic core and F(0) containing the membrane proton channel, linked together by a central stalk and a peripheral stalk. During catalysis, ATP synthesis in the catalytic domain of F(1) is coupled via a rotary mechanism of the central stalk subunits to proton translocation.</text>
</comment>
<comment type="function">
    <text evidence="1">This protein is part of the stalk that links CF(0) to CF(1). It either transmits conformational changes from CF(0) to CF(1) or is implicated in proton conduction.</text>
</comment>
<comment type="subunit">
    <text evidence="1">F-type ATPases have 2 components, F(1) - the catalytic core - and F(0) - the membrane proton channel. F(1) has five subunits: alpha(3), beta(3), gamma(1), delta(1), epsilon(1). F(0) has three main subunits: a(1), b(2) and c(10-14). The alpha and beta chains form an alternating ring which encloses part of the gamma chain. F(1) is attached to F(0) by a central stalk formed by the gamma and epsilon chains, while a peripheral stalk is formed by the delta and b chains.</text>
</comment>
<comment type="subcellular location">
    <subcellularLocation>
        <location evidence="1">Cell membrane</location>
        <topology evidence="1">Peripheral membrane protein</topology>
    </subcellularLocation>
</comment>
<comment type="similarity">
    <text evidence="1">Belongs to the ATPase delta chain family.</text>
</comment>
<keyword id="KW-0066">ATP synthesis</keyword>
<keyword id="KW-1003">Cell membrane</keyword>
<keyword id="KW-0139">CF(1)</keyword>
<keyword id="KW-0375">Hydrogen ion transport</keyword>
<keyword id="KW-0406">Ion transport</keyword>
<keyword id="KW-0472">Membrane</keyword>
<keyword id="KW-0813">Transport</keyword>
<protein>
    <recommendedName>
        <fullName evidence="1">ATP synthase subunit delta</fullName>
    </recommendedName>
    <alternativeName>
        <fullName evidence="1">ATP synthase F(1) sector subunit delta</fullName>
    </alternativeName>
    <alternativeName>
        <fullName evidence="1">F-type ATPase subunit delta</fullName>
        <shortName evidence="1">F-ATPase subunit delta</shortName>
    </alternativeName>
</protein>
<evidence type="ECO:0000255" key="1">
    <source>
        <dbReference type="HAMAP-Rule" id="MF_01416"/>
    </source>
</evidence>
<proteinExistence type="inferred from homology"/>
<accession>A2RFC5</accession>